<sequence length="63" mass="7378">MKATELKDKSVEELNAELINLLREQFNLRMQHTTGQLEKTDQLRKVRRNIARVKTILTQKADA</sequence>
<organism>
    <name type="scientific">Alteromonas mediterranea (strain DSM 17117 / CIP 110805 / LMG 28347 / Deep ecotype)</name>
    <dbReference type="NCBI Taxonomy" id="1774373"/>
    <lineage>
        <taxon>Bacteria</taxon>
        <taxon>Pseudomonadati</taxon>
        <taxon>Pseudomonadota</taxon>
        <taxon>Gammaproteobacteria</taxon>
        <taxon>Alteromonadales</taxon>
        <taxon>Alteromonadaceae</taxon>
        <taxon>Alteromonas/Salinimonas group</taxon>
        <taxon>Alteromonas</taxon>
    </lineage>
</organism>
<accession>B4S099</accession>
<accession>F2G6D9</accession>
<comment type="similarity">
    <text evidence="1">Belongs to the universal ribosomal protein uL29 family.</text>
</comment>
<protein>
    <recommendedName>
        <fullName evidence="1">Large ribosomal subunit protein uL29</fullName>
    </recommendedName>
    <alternativeName>
        <fullName evidence="2">50S ribosomal protein L29</fullName>
    </alternativeName>
</protein>
<name>RL29_ALTMD</name>
<evidence type="ECO:0000255" key="1">
    <source>
        <dbReference type="HAMAP-Rule" id="MF_00374"/>
    </source>
</evidence>
<evidence type="ECO:0000305" key="2"/>
<dbReference type="EMBL" id="CP001103">
    <property type="protein sequence ID" value="AEA96609.1"/>
    <property type="molecule type" value="Genomic_DNA"/>
</dbReference>
<dbReference type="RefSeq" id="WP_012516965.1">
    <property type="nucleotide sequence ID" value="NC_011138.3"/>
</dbReference>
<dbReference type="SMR" id="B4S099"/>
<dbReference type="GeneID" id="78253712"/>
<dbReference type="KEGG" id="amc:MADE_1002300"/>
<dbReference type="HOGENOM" id="CLU_158491_1_2_6"/>
<dbReference type="Proteomes" id="UP000001870">
    <property type="component" value="Chromosome"/>
</dbReference>
<dbReference type="GO" id="GO:0022625">
    <property type="term" value="C:cytosolic large ribosomal subunit"/>
    <property type="evidence" value="ECO:0007669"/>
    <property type="project" value="TreeGrafter"/>
</dbReference>
<dbReference type="GO" id="GO:0003735">
    <property type="term" value="F:structural constituent of ribosome"/>
    <property type="evidence" value="ECO:0007669"/>
    <property type="project" value="InterPro"/>
</dbReference>
<dbReference type="GO" id="GO:0006412">
    <property type="term" value="P:translation"/>
    <property type="evidence" value="ECO:0007669"/>
    <property type="project" value="UniProtKB-UniRule"/>
</dbReference>
<dbReference type="CDD" id="cd00427">
    <property type="entry name" value="Ribosomal_L29_HIP"/>
    <property type="match status" value="1"/>
</dbReference>
<dbReference type="FunFam" id="1.10.287.310:FF:000001">
    <property type="entry name" value="50S ribosomal protein L29"/>
    <property type="match status" value="1"/>
</dbReference>
<dbReference type="Gene3D" id="6.10.140.1970">
    <property type="match status" value="1"/>
</dbReference>
<dbReference type="HAMAP" id="MF_00374">
    <property type="entry name" value="Ribosomal_uL29"/>
    <property type="match status" value="1"/>
</dbReference>
<dbReference type="InterPro" id="IPR050063">
    <property type="entry name" value="Ribosomal_protein_uL29"/>
</dbReference>
<dbReference type="InterPro" id="IPR001854">
    <property type="entry name" value="Ribosomal_uL29"/>
</dbReference>
<dbReference type="InterPro" id="IPR036049">
    <property type="entry name" value="Ribosomal_uL29_sf"/>
</dbReference>
<dbReference type="NCBIfam" id="TIGR00012">
    <property type="entry name" value="L29"/>
    <property type="match status" value="1"/>
</dbReference>
<dbReference type="PANTHER" id="PTHR10916">
    <property type="entry name" value="60S RIBOSOMAL PROTEIN L35/50S RIBOSOMAL PROTEIN L29"/>
    <property type="match status" value="1"/>
</dbReference>
<dbReference type="PANTHER" id="PTHR10916:SF0">
    <property type="entry name" value="LARGE RIBOSOMAL SUBUNIT PROTEIN UL29C"/>
    <property type="match status" value="1"/>
</dbReference>
<dbReference type="Pfam" id="PF00831">
    <property type="entry name" value="Ribosomal_L29"/>
    <property type="match status" value="1"/>
</dbReference>
<dbReference type="SUPFAM" id="SSF46561">
    <property type="entry name" value="Ribosomal protein L29 (L29p)"/>
    <property type="match status" value="1"/>
</dbReference>
<feature type="chain" id="PRO_1000121726" description="Large ribosomal subunit protein uL29">
    <location>
        <begin position="1"/>
        <end position="63"/>
    </location>
</feature>
<proteinExistence type="inferred from homology"/>
<gene>
    <name evidence="1" type="primary">rpmC</name>
    <name type="ordered locus">MADE_1002300</name>
</gene>
<reference key="1">
    <citation type="journal article" date="2008" name="ISME J.">
        <title>Comparative genomics of two ecotypes of the marine planktonic copiotroph Alteromonas macleodii suggests alternative lifestyles associated with different kinds of particulate organic matter.</title>
        <authorList>
            <person name="Ivars-Martinez E."/>
            <person name="Martin-Cuadrado A.-B."/>
            <person name="D'Auria G."/>
            <person name="Mira A."/>
            <person name="Ferriera S."/>
            <person name="Johnson J."/>
            <person name="Friedman R."/>
            <person name="Rodriguez-Valera F."/>
        </authorList>
    </citation>
    <scope>NUCLEOTIDE SEQUENCE [LARGE SCALE GENOMIC DNA]</scope>
    <source>
        <strain>DSM 17117 / CIP 110805 / LMG 28347 / Deep ecotype</strain>
    </source>
</reference>
<keyword id="KW-0687">Ribonucleoprotein</keyword>
<keyword id="KW-0689">Ribosomal protein</keyword>